<sequence length="278" mass="32386">MTVLHSVDFFPSGNASVAIEPRLPQADFPEHHHDFYEIVIVEHGTGIHVFNGQPYTITGGMVCFVRDHDRHLYEHTDNLCLTNVLYRSPDRFQFLAGLNQLLPQEQDGQYPSHWRVNHSVLQQVRQLVAQMEQQEGENDLPSTASREILFMQLLLLLRKSSLQENLENSASRLNLLLAWLEDHFADEVNWDAVADQFSLSLRTLHRQLKQQTGLTPQRYLNRLRLMKARHLLRHSEASVTDIAYRCGFSDSNHFSTLFRREFNWSPRDIRQGRDGFLQ</sequence>
<evidence type="ECO:0000255" key="1">
    <source>
        <dbReference type="HAMAP-Rule" id="MF_01534"/>
    </source>
</evidence>
<dbReference type="EMBL" id="CU928162">
    <property type="protein sequence ID" value="CAR10716.2"/>
    <property type="molecule type" value="Genomic_DNA"/>
</dbReference>
<dbReference type="RefSeq" id="WP_000217163.1">
    <property type="nucleotide sequence ID" value="NC_011745.1"/>
</dbReference>
<dbReference type="SMR" id="B7N2P7"/>
<dbReference type="KEGG" id="ecq:ECED1_4607"/>
<dbReference type="HOGENOM" id="CLU_000445_88_5_6"/>
<dbReference type="Proteomes" id="UP000000748">
    <property type="component" value="Chromosome"/>
</dbReference>
<dbReference type="GO" id="GO:0005737">
    <property type="term" value="C:cytoplasm"/>
    <property type="evidence" value="ECO:0007669"/>
    <property type="project" value="UniProtKB-SubCell"/>
</dbReference>
<dbReference type="GO" id="GO:0003700">
    <property type="term" value="F:DNA-binding transcription factor activity"/>
    <property type="evidence" value="ECO:0007669"/>
    <property type="project" value="UniProtKB-UniRule"/>
</dbReference>
<dbReference type="GO" id="GO:0043565">
    <property type="term" value="F:sequence-specific DNA binding"/>
    <property type="evidence" value="ECO:0007669"/>
    <property type="project" value="InterPro"/>
</dbReference>
<dbReference type="GO" id="GO:0045893">
    <property type="term" value="P:positive regulation of DNA-templated transcription"/>
    <property type="evidence" value="ECO:0007669"/>
    <property type="project" value="UniProtKB-UniRule"/>
</dbReference>
<dbReference type="GO" id="GO:0019299">
    <property type="term" value="P:rhamnose metabolic process"/>
    <property type="evidence" value="ECO:0007669"/>
    <property type="project" value="UniProtKB-UniRule"/>
</dbReference>
<dbReference type="CDD" id="cd06977">
    <property type="entry name" value="cupin_RhaR_RhaS-like_N"/>
    <property type="match status" value="1"/>
</dbReference>
<dbReference type="FunFam" id="1.10.10.60:FF:000181">
    <property type="entry name" value="HTH-type transcriptional activator RhaS"/>
    <property type="match status" value="1"/>
</dbReference>
<dbReference type="Gene3D" id="1.10.10.60">
    <property type="entry name" value="Homeodomain-like"/>
    <property type="match status" value="1"/>
</dbReference>
<dbReference type="Gene3D" id="2.60.120.10">
    <property type="entry name" value="Jelly Rolls"/>
    <property type="match status" value="1"/>
</dbReference>
<dbReference type="HAMAP" id="MF_01534">
    <property type="entry name" value="HTH_type_RhaS"/>
    <property type="match status" value="1"/>
</dbReference>
<dbReference type="InterPro" id="IPR003313">
    <property type="entry name" value="AraC-bd"/>
</dbReference>
<dbReference type="InterPro" id="IPR050204">
    <property type="entry name" value="AraC_XylS_family_regulators"/>
</dbReference>
<dbReference type="InterPro" id="IPR009057">
    <property type="entry name" value="Homeodomain-like_sf"/>
</dbReference>
<dbReference type="InterPro" id="IPR037923">
    <property type="entry name" value="HTH-like"/>
</dbReference>
<dbReference type="InterPro" id="IPR018060">
    <property type="entry name" value="HTH_AraC"/>
</dbReference>
<dbReference type="InterPro" id="IPR018062">
    <property type="entry name" value="HTH_AraC-typ_CS"/>
</dbReference>
<dbReference type="InterPro" id="IPR047220">
    <property type="entry name" value="RhaR_RhaS-like_N"/>
</dbReference>
<dbReference type="InterPro" id="IPR014710">
    <property type="entry name" value="RmlC-like_jellyroll"/>
</dbReference>
<dbReference type="InterPro" id="IPR020449">
    <property type="entry name" value="Tscrpt_reg_AraC-type_HTH"/>
</dbReference>
<dbReference type="InterPro" id="IPR023609">
    <property type="entry name" value="Tscrpt_reg_HTH_RhaS"/>
</dbReference>
<dbReference type="NCBIfam" id="NF010028">
    <property type="entry name" value="PRK13503.1"/>
    <property type="match status" value="1"/>
</dbReference>
<dbReference type="PANTHER" id="PTHR46796:SF13">
    <property type="entry name" value="HTH-TYPE TRANSCRIPTIONAL ACTIVATOR RHAS"/>
    <property type="match status" value="1"/>
</dbReference>
<dbReference type="PANTHER" id="PTHR46796">
    <property type="entry name" value="HTH-TYPE TRANSCRIPTIONAL ACTIVATOR RHAS-RELATED"/>
    <property type="match status" value="1"/>
</dbReference>
<dbReference type="Pfam" id="PF02311">
    <property type="entry name" value="AraC_binding"/>
    <property type="match status" value="1"/>
</dbReference>
<dbReference type="Pfam" id="PF12833">
    <property type="entry name" value="HTH_18"/>
    <property type="match status" value="1"/>
</dbReference>
<dbReference type="PRINTS" id="PR00032">
    <property type="entry name" value="HTHARAC"/>
</dbReference>
<dbReference type="SMART" id="SM00342">
    <property type="entry name" value="HTH_ARAC"/>
    <property type="match status" value="1"/>
</dbReference>
<dbReference type="SUPFAM" id="SSF46689">
    <property type="entry name" value="Homeodomain-like"/>
    <property type="match status" value="2"/>
</dbReference>
<dbReference type="SUPFAM" id="SSF51215">
    <property type="entry name" value="Regulatory protein AraC"/>
    <property type="match status" value="1"/>
</dbReference>
<dbReference type="PROSITE" id="PS00041">
    <property type="entry name" value="HTH_ARAC_FAMILY_1"/>
    <property type="match status" value="1"/>
</dbReference>
<dbReference type="PROSITE" id="PS01124">
    <property type="entry name" value="HTH_ARAC_FAMILY_2"/>
    <property type="match status" value="1"/>
</dbReference>
<reference key="1">
    <citation type="journal article" date="2009" name="PLoS Genet.">
        <title>Organised genome dynamics in the Escherichia coli species results in highly diverse adaptive paths.</title>
        <authorList>
            <person name="Touchon M."/>
            <person name="Hoede C."/>
            <person name="Tenaillon O."/>
            <person name="Barbe V."/>
            <person name="Baeriswyl S."/>
            <person name="Bidet P."/>
            <person name="Bingen E."/>
            <person name="Bonacorsi S."/>
            <person name="Bouchier C."/>
            <person name="Bouvet O."/>
            <person name="Calteau A."/>
            <person name="Chiapello H."/>
            <person name="Clermont O."/>
            <person name="Cruveiller S."/>
            <person name="Danchin A."/>
            <person name="Diard M."/>
            <person name="Dossat C."/>
            <person name="Karoui M.E."/>
            <person name="Frapy E."/>
            <person name="Garry L."/>
            <person name="Ghigo J.M."/>
            <person name="Gilles A.M."/>
            <person name="Johnson J."/>
            <person name="Le Bouguenec C."/>
            <person name="Lescat M."/>
            <person name="Mangenot S."/>
            <person name="Martinez-Jehanne V."/>
            <person name="Matic I."/>
            <person name="Nassif X."/>
            <person name="Oztas S."/>
            <person name="Petit M.A."/>
            <person name="Pichon C."/>
            <person name="Rouy Z."/>
            <person name="Ruf C.S."/>
            <person name="Schneider D."/>
            <person name="Tourret J."/>
            <person name="Vacherie B."/>
            <person name="Vallenet D."/>
            <person name="Medigue C."/>
            <person name="Rocha E.P.C."/>
            <person name="Denamur E."/>
        </authorList>
    </citation>
    <scope>NUCLEOTIDE SEQUENCE [LARGE SCALE GENOMIC DNA]</scope>
    <source>
        <strain>ED1a</strain>
    </source>
</reference>
<gene>
    <name evidence="1" type="primary">rhaS</name>
    <name type="ordered locus">ECED1_4607</name>
</gene>
<accession>B7N2P7</accession>
<keyword id="KW-0010">Activator</keyword>
<keyword id="KW-0963">Cytoplasm</keyword>
<keyword id="KW-0238">DNA-binding</keyword>
<keyword id="KW-0677">Repeat</keyword>
<keyword id="KW-0684">Rhamnose metabolism</keyword>
<keyword id="KW-0804">Transcription</keyword>
<keyword id="KW-0805">Transcription regulation</keyword>
<feature type="chain" id="PRO_1000185179" description="HTH-type transcriptional activator RhaS">
    <location>
        <begin position="1"/>
        <end position="278"/>
    </location>
</feature>
<feature type="domain" description="HTH araC/xylS-type" evidence="1">
    <location>
        <begin position="174"/>
        <end position="272"/>
    </location>
</feature>
<feature type="DNA-binding region" description="H-T-H motif" evidence="1">
    <location>
        <begin position="191"/>
        <end position="212"/>
    </location>
</feature>
<feature type="DNA-binding region" description="H-T-H motif" evidence="1">
    <location>
        <begin position="239"/>
        <end position="262"/>
    </location>
</feature>
<feature type="site" description="Interaction with sigma-70" evidence="1">
    <location>
        <position position="241"/>
    </location>
</feature>
<feature type="site" description="Interaction with sigma-70" evidence="1">
    <location>
        <position position="250"/>
    </location>
</feature>
<organism>
    <name type="scientific">Escherichia coli O81 (strain ED1a)</name>
    <dbReference type="NCBI Taxonomy" id="585397"/>
    <lineage>
        <taxon>Bacteria</taxon>
        <taxon>Pseudomonadati</taxon>
        <taxon>Pseudomonadota</taxon>
        <taxon>Gammaproteobacteria</taxon>
        <taxon>Enterobacterales</taxon>
        <taxon>Enterobacteriaceae</taxon>
        <taxon>Escherichia</taxon>
    </lineage>
</organism>
<proteinExistence type="inferred from homology"/>
<comment type="function">
    <text evidence="1">Activates expression of the rhaBAD and rhaT operons.</text>
</comment>
<comment type="subunit">
    <text evidence="1">Binds DNA as a dimer.</text>
</comment>
<comment type="subcellular location">
    <subcellularLocation>
        <location evidence="1">Cytoplasm</location>
    </subcellularLocation>
</comment>
<protein>
    <recommendedName>
        <fullName evidence="1">HTH-type transcriptional activator RhaS</fullName>
    </recommendedName>
    <alternativeName>
        <fullName evidence="1">L-rhamnose operon regulatory protein RhaS</fullName>
    </alternativeName>
</protein>
<name>RHAS_ECO81</name>